<proteinExistence type="inferred from homology"/>
<reference key="1">
    <citation type="journal article" date="2002" name="Science">
        <title>The genome sequence of the malaria mosquito Anopheles gambiae.</title>
        <authorList>
            <person name="Holt R.A."/>
            <person name="Subramanian G.M."/>
            <person name="Halpern A."/>
            <person name="Sutton G.G."/>
            <person name="Charlab R."/>
            <person name="Nusskern D.R."/>
            <person name="Wincker P."/>
            <person name="Clark A.G."/>
            <person name="Ribeiro J.M.C."/>
            <person name="Wides R."/>
            <person name="Salzberg S.L."/>
            <person name="Loftus B.J."/>
            <person name="Yandell M.D."/>
            <person name="Majoros W.H."/>
            <person name="Rusch D.B."/>
            <person name="Lai Z."/>
            <person name="Kraft C.L."/>
            <person name="Abril J.F."/>
            <person name="Anthouard V."/>
            <person name="Arensburger P."/>
            <person name="Atkinson P.W."/>
            <person name="Baden H."/>
            <person name="de Berardinis V."/>
            <person name="Baldwin D."/>
            <person name="Benes V."/>
            <person name="Biedler J."/>
            <person name="Blass C."/>
            <person name="Bolanos R."/>
            <person name="Boscus D."/>
            <person name="Barnstead M."/>
            <person name="Cai S."/>
            <person name="Center A."/>
            <person name="Chaturverdi K."/>
            <person name="Christophides G.K."/>
            <person name="Chrystal M.A.M."/>
            <person name="Clamp M."/>
            <person name="Cravchik A."/>
            <person name="Curwen V."/>
            <person name="Dana A."/>
            <person name="Delcher A."/>
            <person name="Dew I."/>
            <person name="Evans C.A."/>
            <person name="Flanigan M."/>
            <person name="Grundschober-Freimoser A."/>
            <person name="Friedli L."/>
            <person name="Gu Z."/>
            <person name="Guan P."/>
            <person name="Guigo R."/>
            <person name="Hillenmeyer M.E."/>
            <person name="Hladun S.L."/>
            <person name="Hogan J.R."/>
            <person name="Hong Y.S."/>
            <person name="Hoover J."/>
            <person name="Jaillon O."/>
            <person name="Ke Z."/>
            <person name="Kodira C.D."/>
            <person name="Kokoza E."/>
            <person name="Koutsos A."/>
            <person name="Letunic I."/>
            <person name="Levitsky A.A."/>
            <person name="Liang Y."/>
            <person name="Lin J.-J."/>
            <person name="Lobo N.F."/>
            <person name="Lopez J.R."/>
            <person name="Malek J.A."/>
            <person name="McIntosh T.C."/>
            <person name="Meister S."/>
            <person name="Miller J.R."/>
            <person name="Mobarry C."/>
            <person name="Mongin E."/>
            <person name="Murphy S.D."/>
            <person name="O'Brochta D.A."/>
            <person name="Pfannkoch C."/>
            <person name="Qi R."/>
            <person name="Regier M.A."/>
            <person name="Remington K."/>
            <person name="Shao H."/>
            <person name="Sharakhova M.V."/>
            <person name="Sitter C.D."/>
            <person name="Shetty J."/>
            <person name="Smith T.J."/>
            <person name="Strong R."/>
            <person name="Sun J."/>
            <person name="Thomasova D."/>
            <person name="Ton L.Q."/>
            <person name="Topalis P."/>
            <person name="Tu Z.J."/>
            <person name="Unger M.F."/>
            <person name="Walenz B."/>
            <person name="Wang A.H."/>
            <person name="Wang J."/>
            <person name="Wang M."/>
            <person name="Wang X."/>
            <person name="Woodford K.J."/>
            <person name="Wortman J.R."/>
            <person name="Wu M."/>
            <person name="Yao A."/>
            <person name="Zdobnov E.M."/>
            <person name="Zhang H."/>
            <person name="Zhao Q."/>
            <person name="Zhao S."/>
            <person name="Zhu S.C."/>
            <person name="Zhimulev I."/>
            <person name="Coluzzi M."/>
            <person name="della Torre A."/>
            <person name="Roth C.W."/>
            <person name="Louis C."/>
            <person name="Kalush F."/>
            <person name="Mural R.J."/>
            <person name="Myers E.W."/>
            <person name="Adams M.D."/>
            <person name="Smith H.O."/>
            <person name="Broder S."/>
            <person name="Gardner M.J."/>
            <person name="Fraser C.M."/>
            <person name="Birney E."/>
            <person name="Bork P."/>
            <person name="Brey P.T."/>
            <person name="Venter J.C."/>
            <person name="Weissenbach J."/>
            <person name="Kafatos F.C."/>
            <person name="Collins F.H."/>
            <person name="Hoffman S.L."/>
        </authorList>
    </citation>
    <scope>NUCLEOTIDE SEQUENCE [LARGE SCALE GENOMIC DNA]</scope>
    <source>
        <strain>PEST</strain>
    </source>
</reference>
<comment type="function">
    <text evidence="1">Involved in endocytic trafficking. Probably acts as a cytoskeletal linker protein that tethers endosome vesicles to the cytoskeleton.</text>
</comment>
<comment type="subunit">
    <text evidence="1">Homodimer. Interacts with microtubules via its N-terminus.</text>
</comment>
<comment type="subcellular location">
    <subcellularLocation>
        <location evidence="1">Cytoplasm</location>
        <location evidence="1">Cytoskeleton</location>
    </subcellularLocation>
    <subcellularLocation>
        <location evidence="1">Endosome</location>
    </subcellularLocation>
</comment>
<comment type="domain">
    <text evidence="1">The coiled coil domain mediates homodimerization.</text>
</comment>
<comment type="similarity">
    <text evidence="4">Belongs to the hook family.</text>
</comment>
<accession>Q7PWT9</accession>
<protein>
    <recommendedName>
        <fullName>Protein hook</fullName>
    </recommendedName>
</protein>
<feature type="chain" id="PRO_0000379060" description="Protein hook">
    <location>
        <begin position="1"/>
        <end position="690"/>
    </location>
</feature>
<feature type="domain" description="Calponin-homology (CH)" evidence="3">
    <location>
        <begin position="6"/>
        <end position="122"/>
    </location>
</feature>
<feature type="coiled-coil region" evidence="2">
    <location>
        <begin position="134"/>
        <end position="515"/>
    </location>
</feature>
<feature type="coiled-coil region" evidence="2">
    <location>
        <begin position="546"/>
        <end position="577"/>
    </location>
</feature>
<organism>
    <name type="scientific">Anopheles gambiae</name>
    <name type="common">African malaria mosquito</name>
    <dbReference type="NCBI Taxonomy" id="7165"/>
    <lineage>
        <taxon>Eukaryota</taxon>
        <taxon>Metazoa</taxon>
        <taxon>Ecdysozoa</taxon>
        <taxon>Arthropoda</taxon>
        <taxon>Hexapoda</taxon>
        <taxon>Insecta</taxon>
        <taxon>Pterygota</taxon>
        <taxon>Neoptera</taxon>
        <taxon>Endopterygota</taxon>
        <taxon>Diptera</taxon>
        <taxon>Nematocera</taxon>
        <taxon>Culicoidea</taxon>
        <taxon>Culicidae</taxon>
        <taxon>Anophelinae</taxon>
        <taxon>Anopheles</taxon>
    </lineage>
</organism>
<dbReference type="EMBL" id="AAAB01008984">
    <property type="protein sequence ID" value="EAA14793.4"/>
    <property type="molecule type" value="Genomic_DNA"/>
</dbReference>
<dbReference type="RefSeq" id="XP_319596.4">
    <property type="nucleotide sequence ID" value="XM_319596.4"/>
</dbReference>
<dbReference type="SMR" id="Q7PWT9"/>
<dbReference type="FunCoup" id="Q7PWT9">
    <property type="interactions" value="580"/>
</dbReference>
<dbReference type="STRING" id="7165.Q7PWT9"/>
<dbReference type="PaxDb" id="7165-AGAP008854-PA"/>
<dbReference type="EnsemblMetazoa" id="AGAP008854-RA">
    <property type="protein sequence ID" value="AGAP008854-PA"/>
    <property type="gene ID" value="AGAP008854"/>
</dbReference>
<dbReference type="GeneID" id="1279821"/>
<dbReference type="KEGG" id="aga:1279821"/>
<dbReference type="CTD" id="35169"/>
<dbReference type="VEuPathDB" id="VectorBase:AGAMI1_006917"/>
<dbReference type="VEuPathDB" id="VectorBase:AGAP008854"/>
<dbReference type="eggNOG" id="ENOG502QQM8">
    <property type="taxonomic scope" value="Eukaryota"/>
</dbReference>
<dbReference type="HOGENOM" id="CLU_011214_1_0_1"/>
<dbReference type="InParanoid" id="Q7PWT9"/>
<dbReference type="OMA" id="DAKYRKC"/>
<dbReference type="PhylomeDB" id="Q7PWT9"/>
<dbReference type="Proteomes" id="UP000007062">
    <property type="component" value="Chromosome 3R"/>
</dbReference>
<dbReference type="GO" id="GO:0005813">
    <property type="term" value="C:centrosome"/>
    <property type="evidence" value="ECO:0000318"/>
    <property type="project" value="GO_Central"/>
</dbReference>
<dbReference type="GO" id="GO:0005737">
    <property type="term" value="C:cytoplasm"/>
    <property type="evidence" value="ECO:0000318"/>
    <property type="project" value="GO_Central"/>
</dbReference>
<dbReference type="GO" id="GO:0005768">
    <property type="term" value="C:endosome"/>
    <property type="evidence" value="ECO:0000250"/>
    <property type="project" value="UniProtKB"/>
</dbReference>
<dbReference type="GO" id="GO:0005874">
    <property type="term" value="C:microtubule"/>
    <property type="evidence" value="ECO:0007669"/>
    <property type="project" value="UniProtKB-KW"/>
</dbReference>
<dbReference type="GO" id="GO:0051959">
    <property type="term" value="F:dynein light intermediate chain binding"/>
    <property type="evidence" value="ECO:0000318"/>
    <property type="project" value="GO_Central"/>
</dbReference>
<dbReference type="GO" id="GO:0008017">
    <property type="term" value="F:microtubule binding"/>
    <property type="evidence" value="ECO:0000250"/>
    <property type="project" value="UniProtKB"/>
</dbReference>
<dbReference type="GO" id="GO:0031122">
    <property type="term" value="P:cytoplasmic microtubule organization"/>
    <property type="evidence" value="ECO:0000318"/>
    <property type="project" value="GO_Central"/>
</dbReference>
<dbReference type="GO" id="GO:0030705">
    <property type="term" value="P:cytoskeleton-dependent intracellular transport"/>
    <property type="evidence" value="ECO:0000250"/>
    <property type="project" value="UniProtKB"/>
</dbReference>
<dbReference type="GO" id="GO:0006897">
    <property type="term" value="P:endocytosis"/>
    <property type="evidence" value="ECO:0000250"/>
    <property type="project" value="UniProtKB"/>
</dbReference>
<dbReference type="CDD" id="cd22222">
    <property type="entry name" value="HkD_Hook"/>
    <property type="match status" value="1"/>
</dbReference>
<dbReference type="FunFam" id="1.10.418.10:FF:000024">
    <property type="entry name" value="Hook homolog 3 (Drosophila)"/>
    <property type="match status" value="1"/>
</dbReference>
<dbReference type="Gene3D" id="1.10.418.10">
    <property type="entry name" value="Calponin-like domain"/>
    <property type="match status" value="1"/>
</dbReference>
<dbReference type="InterPro" id="IPR001715">
    <property type="entry name" value="CH_dom"/>
</dbReference>
<dbReference type="InterPro" id="IPR036872">
    <property type="entry name" value="CH_dom_sf"/>
</dbReference>
<dbReference type="InterPro" id="IPR008636">
    <property type="entry name" value="Hook_C"/>
</dbReference>
<dbReference type="InterPro" id="IPR043936">
    <property type="entry name" value="HOOK_N"/>
</dbReference>
<dbReference type="InterPro" id="IPR038077">
    <property type="entry name" value="Troponin_sf"/>
</dbReference>
<dbReference type="PANTHER" id="PTHR18947">
    <property type="entry name" value="HOOK PROTEINS"/>
    <property type="match status" value="1"/>
</dbReference>
<dbReference type="PANTHER" id="PTHR18947:SF39">
    <property type="entry name" value="PROTEIN HOOK"/>
    <property type="match status" value="1"/>
</dbReference>
<dbReference type="Pfam" id="PF05622">
    <property type="entry name" value="HOOK"/>
    <property type="match status" value="1"/>
</dbReference>
<dbReference type="Pfam" id="PF19047">
    <property type="entry name" value="HOOK_N"/>
    <property type="match status" value="1"/>
</dbReference>
<dbReference type="SUPFAM" id="SSF116907">
    <property type="entry name" value="Hook domain"/>
    <property type="match status" value="1"/>
</dbReference>
<dbReference type="SUPFAM" id="SSF90250">
    <property type="entry name" value="Troponin coil-coiled subunits"/>
    <property type="match status" value="1"/>
</dbReference>
<dbReference type="PROSITE" id="PS50021">
    <property type="entry name" value="CH"/>
    <property type="match status" value="1"/>
</dbReference>
<sequence>MENDKMEIYESLIRWLSELNLSAPHGTVQELSDGAALAQALNQIAPEVFTDSWLSKIKSDVGANWRLKVSNLRKIIEGIYVYYQDELSLNLSEELRPDALKIAEKGDPHELGRLLQLILGCAVNCLEKQKYITQIMELEESLQRNIMAALQDIEYIWQGASPSRNSINTAATSLDVKTLQEDRDTLAQKCHETNKKMLGLIEEKAALQQEIVKLQAIVGRYENPNLIGDDGTSLGPIQLGSSRYNDLRKLVDSLKDELLQAETARDDLKMKSMIQEKEIGELQVKIDELHAATAEIAQLKDEIDILKEANEKLKICETQLQTYKKKLEDYNDLKKQIKLQEERSADYLKQNLEYEEEAKKYAGLKGQVELYKKKIQDLHGMLDEEMGKTVRAEFEYNQLQGQLAVVQREKETLLSERDTLREALDELKCGQAVGADGVGHGGPGGNTMSKELHSNDVCERIERLERENKALREGQGGQTALSQLLDDANQRNEKLREQLKSANQKILLLSQHHAEDGTTKSELEMQMKQTLELGEQRSSAQQQLDETTQHQLSNLHTKIANLEAALVVKDQELQAADVRYKKCVEKAKEVIKTLDAHAISEALLMDKVDSASGTGVDATLTTVGNGGTAARAPMGQQEEQLIATAFYRLGMVCHREAVDARLLSGPGQSFLARQRQPAARKPLNANYAKK</sequence>
<evidence type="ECO:0000250" key="1">
    <source>
        <dbReference type="UniProtKB" id="Q24185"/>
    </source>
</evidence>
<evidence type="ECO:0000255" key="2"/>
<evidence type="ECO:0000255" key="3">
    <source>
        <dbReference type="PROSITE-ProRule" id="PRU00044"/>
    </source>
</evidence>
<evidence type="ECO:0000305" key="4"/>
<gene>
    <name evidence="1" type="primary">hook</name>
    <name evidence="1" type="synonym">hk</name>
    <name type="ORF">AGAP008854</name>
</gene>
<keyword id="KW-0175">Coiled coil</keyword>
<keyword id="KW-0963">Cytoplasm</keyword>
<keyword id="KW-0206">Cytoskeleton</keyword>
<keyword id="KW-0254">Endocytosis</keyword>
<keyword id="KW-0967">Endosome</keyword>
<keyword id="KW-0493">Microtubule</keyword>
<keyword id="KW-1185">Reference proteome</keyword>
<name>HOOK_ANOGA</name>